<accession>Q4UNC4</accession>
<evidence type="ECO:0000255" key="1">
    <source>
        <dbReference type="HAMAP-Rule" id="MF_00373"/>
    </source>
</evidence>
<evidence type="ECO:0000305" key="2"/>
<feature type="chain" id="PRO_0000277963" description="Large ribosomal subunit protein bL28">
    <location>
        <begin position="1"/>
        <end position="97"/>
    </location>
</feature>
<gene>
    <name evidence="1" type="primary">rpmB</name>
    <name type="ordered locus">RF_0083</name>
</gene>
<proteinExistence type="inferred from homology"/>
<dbReference type="EMBL" id="CP000053">
    <property type="protein sequence ID" value="AAY60934.1"/>
    <property type="molecule type" value="Genomic_DNA"/>
</dbReference>
<dbReference type="SMR" id="Q4UNC4"/>
<dbReference type="STRING" id="315456.RF_0083"/>
<dbReference type="KEGG" id="rfe:RF_0083"/>
<dbReference type="eggNOG" id="COG0227">
    <property type="taxonomic scope" value="Bacteria"/>
</dbReference>
<dbReference type="HOGENOM" id="CLU_064548_4_2_5"/>
<dbReference type="OrthoDB" id="9805609at2"/>
<dbReference type="Proteomes" id="UP000008548">
    <property type="component" value="Chromosome"/>
</dbReference>
<dbReference type="GO" id="GO:1990904">
    <property type="term" value="C:ribonucleoprotein complex"/>
    <property type="evidence" value="ECO:0007669"/>
    <property type="project" value="UniProtKB-KW"/>
</dbReference>
<dbReference type="GO" id="GO:0005840">
    <property type="term" value="C:ribosome"/>
    <property type="evidence" value="ECO:0007669"/>
    <property type="project" value="UniProtKB-KW"/>
</dbReference>
<dbReference type="GO" id="GO:0003735">
    <property type="term" value="F:structural constituent of ribosome"/>
    <property type="evidence" value="ECO:0007669"/>
    <property type="project" value="InterPro"/>
</dbReference>
<dbReference type="GO" id="GO:0006412">
    <property type="term" value="P:translation"/>
    <property type="evidence" value="ECO:0007669"/>
    <property type="project" value="UniProtKB-UniRule"/>
</dbReference>
<dbReference type="Gene3D" id="2.30.170.40">
    <property type="entry name" value="Ribosomal protein L28/L24"/>
    <property type="match status" value="1"/>
</dbReference>
<dbReference type="HAMAP" id="MF_00373">
    <property type="entry name" value="Ribosomal_bL28"/>
    <property type="match status" value="1"/>
</dbReference>
<dbReference type="InterPro" id="IPR026569">
    <property type="entry name" value="Ribosomal_bL28"/>
</dbReference>
<dbReference type="InterPro" id="IPR034704">
    <property type="entry name" value="Ribosomal_bL28/bL31-like_sf"/>
</dbReference>
<dbReference type="InterPro" id="IPR001383">
    <property type="entry name" value="Ribosomal_bL28_bact-type"/>
</dbReference>
<dbReference type="InterPro" id="IPR037147">
    <property type="entry name" value="Ribosomal_bL28_sf"/>
</dbReference>
<dbReference type="NCBIfam" id="TIGR00009">
    <property type="entry name" value="L28"/>
    <property type="match status" value="1"/>
</dbReference>
<dbReference type="PANTHER" id="PTHR13528">
    <property type="entry name" value="39S RIBOSOMAL PROTEIN L28, MITOCHONDRIAL"/>
    <property type="match status" value="1"/>
</dbReference>
<dbReference type="PANTHER" id="PTHR13528:SF2">
    <property type="entry name" value="LARGE RIBOSOMAL SUBUNIT PROTEIN BL28M"/>
    <property type="match status" value="1"/>
</dbReference>
<dbReference type="Pfam" id="PF00830">
    <property type="entry name" value="Ribosomal_L28"/>
    <property type="match status" value="1"/>
</dbReference>
<dbReference type="SUPFAM" id="SSF143800">
    <property type="entry name" value="L28p-like"/>
    <property type="match status" value="1"/>
</dbReference>
<sequence>MSRKCELTGVGVLYGNNVSHSQRKTRRRFEPNLRSVKFTSDITAGEYRLSVNARCISSVEKAGGFDAYILKADDNVLSSNARTIKKKIIQTKTAKSL</sequence>
<protein>
    <recommendedName>
        <fullName evidence="1">Large ribosomal subunit protein bL28</fullName>
    </recommendedName>
    <alternativeName>
        <fullName evidence="2">50S ribosomal protein L28</fullName>
    </alternativeName>
</protein>
<name>RL28_RICFE</name>
<reference key="1">
    <citation type="journal article" date="2005" name="PLoS Biol.">
        <title>The genome sequence of Rickettsia felis identifies the first putative conjugative plasmid in an obligate intracellular parasite.</title>
        <authorList>
            <person name="Ogata H."/>
            <person name="Renesto P."/>
            <person name="Audic S."/>
            <person name="Robert C."/>
            <person name="Blanc G."/>
            <person name="Fournier P.-E."/>
            <person name="Parinello H."/>
            <person name="Claverie J.-M."/>
            <person name="Raoult D."/>
        </authorList>
    </citation>
    <scope>NUCLEOTIDE SEQUENCE [LARGE SCALE GENOMIC DNA]</scope>
    <source>
        <strain>ATCC VR-1525 / URRWXCal2</strain>
    </source>
</reference>
<organism>
    <name type="scientific">Rickettsia felis (strain ATCC VR-1525 / URRWXCal2)</name>
    <name type="common">Rickettsia azadi</name>
    <dbReference type="NCBI Taxonomy" id="315456"/>
    <lineage>
        <taxon>Bacteria</taxon>
        <taxon>Pseudomonadati</taxon>
        <taxon>Pseudomonadota</taxon>
        <taxon>Alphaproteobacteria</taxon>
        <taxon>Rickettsiales</taxon>
        <taxon>Rickettsiaceae</taxon>
        <taxon>Rickettsieae</taxon>
        <taxon>Rickettsia</taxon>
        <taxon>spotted fever group</taxon>
    </lineage>
</organism>
<comment type="similarity">
    <text evidence="1">Belongs to the bacterial ribosomal protein bL28 family.</text>
</comment>
<keyword id="KW-0687">Ribonucleoprotein</keyword>
<keyword id="KW-0689">Ribosomal protein</keyword>